<feature type="chain" id="PRO_1000114962" description="Potassium-transporting ATPase ATP-binding subunit">
    <location>
        <begin position="1"/>
        <end position="682"/>
    </location>
</feature>
<feature type="transmembrane region" description="Helical" evidence="1">
    <location>
        <begin position="34"/>
        <end position="54"/>
    </location>
</feature>
<feature type="transmembrane region" description="Helical" evidence="1">
    <location>
        <begin position="58"/>
        <end position="78"/>
    </location>
</feature>
<feature type="transmembrane region" description="Helical" evidence="1">
    <location>
        <begin position="219"/>
        <end position="239"/>
    </location>
</feature>
<feature type="transmembrane region" description="Helical" evidence="1">
    <location>
        <begin position="254"/>
        <end position="274"/>
    </location>
</feature>
<feature type="transmembrane region" description="Helical" evidence="1">
    <location>
        <begin position="588"/>
        <end position="608"/>
    </location>
</feature>
<feature type="transmembrane region" description="Helical" evidence="1">
    <location>
        <begin position="616"/>
        <end position="636"/>
    </location>
</feature>
<feature type="transmembrane region" description="Helical" evidence="1">
    <location>
        <begin position="662"/>
        <end position="682"/>
    </location>
</feature>
<feature type="active site" description="4-aspartylphosphate intermediate" evidence="1">
    <location>
        <position position="307"/>
    </location>
</feature>
<feature type="binding site" evidence="1">
    <location>
        <position position="344"/>
    </location>
    <ligand>
        <name>ATP</name>
        <dbReference type="ChEBI" id="CHEBI:30616"/>
    </ligand>
</feature>
<feature type="binding site" evidence="1">
    <location>
        <position position="348"/>
    </location>
    <ligand>
        <name>ATP</name>
        <dbReference type="ChEBI" id="CHEBI:30616"/>
    </ligand>
</feature>
<feature type="binding site" evidence="1">
    <location>
        <begin position="377"/>
        <end position="384"/>
    </location>
    <ligand>
        <name>ATP</name>
        <dbReference type="ChEBI" id="CHEBI:30616"/>
    </ligand>
</feature>
<feature type="binding site" evidence="1">
    <location>
        <position position="395"/>
    </location>
    <ligand>
        <name>ATP</name>
        <dbReference type="ChEBI" id="CHEBI:30616"/>
    </ligand>
</feature>
<feature type="binding site" evidence="1">
    <location>
        <position position="518"/>
    </location>
    <ligand>
        <name>Mg(2+)</name>
        <dbReference type="ChEBI" id="CHEBI:18420"/>
    </ligand>
</feature>
<feature type="binding site" evidence="1">
    <location>
        <position position="522"/>
    </location>
    <ligand>
        <name>Mg(2+)</name>
        <dbReference type="ChEBI" id="CHEBI:18420"/>
    </ligand>
</feature>
<accession>B4SZB1</accession>
<sequence>MSRKQLALFEPVLLVQALTDAVKKLSPRAQWRNPVMFVVWAGSVLTTLLTLAMVTGQIAGSALFTGIISLWLWFTVLFANFAEALAEGRSKAQANSLKGVKKTAFARRLRAPRHDAQADNVPAAELRKGDIVLVKAGDIIPCDGEVIEGGASVDESAITGESAPVIRESGGDFASVTGGTRILSDWLVIACSVNPGETFLDRMIAMVEGAQRRKTPNEIALTILLIALTIVFLLATATLWPFSAWGGNAVSVTVLVALLVCLIPTTIGGLLSAIGVAGMSRMLGANVIATSGRAVEAAGDVDVLLLDKTGTITLGNRQASDFIPARGVDERTLADAAQLASLADETPEGRSIVILAKQRFNLRERDVQSLHATFVPFTAQSRMSGINIDNRMIRKGSVDAIRRHVESNGGHFPADVEQNVENVARLGATPLVVVEGARILGVIALKDIVKGGIKERFAQLRKMGIKTVMITGDNRLTAAAIAAEAGVDDFLAEATPEAKLALIRQYQAEGRLVAMTGDGTNDAPALAQADVAVAMNSGTQAAKEAGNMVDLDSNPTKLIEVVHIGKQMLMTRGSLTTFSIANDVAKYFAIIPAAFAATYPQLNALNVMGLHSPNSAILSAVIFNALIIIFLIPLALKGVSYKPLSASAMLRRNLWIYGLGGLVVPFIGIKVIDVLLTLLGLA</sequence>
<name>KDPB_SALNS</name>
<organism>
    <name type="scientific">Salmonella newport (strain SL254)</name>
    <dbReference type="NCBI Taxonomy" id="423368"/>
    <lineage>
        <taxon>Bacteria</taxon>
        <taxon>Pseudomonadati</taxon>
        <taxon>Pseudomonadota</taxon>
        <taxon>Gammaproteobacteria</taxon>
        <taxon>Enterobacterales</taxon>
        <taxon>Enterobacteriaceae</taxon>
        <taxon>Salmonella</taxon>
    </lineage>
</organism>
<reference key="1">
    <citation type="journal article" date="2011" name="J. Bacteriol.">
        <title>Comparative genomics of 28 Salmonella enterica isolates: evidence for CRISPR-mediated adaptive sublineage evolution.</title>
        <authorList>
            <person name="Fricke W.F."/>
            <person name="Mammel M.K."/>
            <person name="McDermott P.F."/>
            <person name="Tartera C."/>
            <person name="White D.G."/>
            <person name="Leclerc J.E."/>
            <person name="Ravel J."/>
            <person name="Cebula T.A."/>
        </authorList>
    </citation>
    <scope>NUCLEOTIDE SEQUENCE [LARGE SCALE GENOMIC DNA]</scope>
    <source>
        <strain>SL254</strain>
    </source>
</reference>
<keyword id="KW-0067">ATP-binding</keyword>
<keyword id="KW-0997">Cell inner membrane</keyword>
<keyword id="KW-1003">Cell membrane</keyword>
<keyword id="KW-0406">Ion transport</keyword>
<keyword id="KW-0460">Magnesium</keyword>
<keyword id="KW-0472">Membrane</keyword>
<keyword id="KW-0479">Metal-binding</keyword>
<keyword id="KW-0547">Nucleotide-binding</keyword>
<keyword id="KW-0597">Phosphoprotein</keyword>
<keyword id="KW-0630">Potassium</keyword>
<keyword id="KW-0633">Potassium transport</keyword>
<keyword id="KW-1278">Translocase</keyword>
<keyword id="KW-0812">Transmembrane</keyword>
<keyword id="KW-1133">Transmembrane helix</keyword>
<keyword id="KW-0813">Transport</keyword>
<evidence type="ECO:0000255" key="1">
    <source>
        <dbReference type="HAMAP-Rule" id="MF_00285"/>
    </source>
</evidence>
<gene>
    <name evidence="1" type="primary">kdpB</name>
    <name type="ordered locus">SNSL254_A0766</name>
</gene>
<protein>
    <recommendedName>
        <fullName evidence="1">Potassium-transporting ATPase ATP-binding subunit</fullName>
        <ecNumber evidence="1">7.2.2.6</ecNumber>
    </recommendedName>
    <alternativeName>
        <fullName evidence="1">ATP phosphohydrolase [potassium-transporting] B chain</fullName>
    </alternativeName>
    <alternativeName>
        <fullName evidence="1">Potassium-binding and translocating subunit B</fullName>
    </alternativeName>
    <alternativeName>
        <fullName evidence="1">Potassium-translocating ATPase B chain</fullName>
    </alternativeName>
</protein>
<proteinExistence type="inferred from homology"/>
<dbReference type="EC" id="7.2.2.6" evidence="1"/>
<dbReference type="EMBL" id="CP001113">
    <property type="protein sequence ID" value="ACF61500.1"/>
    <property type="molecule type" value="Genomic_DNA"/>
</dbReference>
<dbReference type="RefSeq" id="WP_000088023.1">
    <property type="nucleotide sequence ID" value="NZ_CCMR01000003.1"/>
</dbReference>
<dbReference type="SMR" id="B4SZB1"/>
<dbReference type="KEGG" id="see:SNSL254_A0766"/>
<dbReference type="HOGENOM" id="CLU_025728_2_0_6"/>
<dbReference type="Proteomes" id="UP000008824">
    <property type="component" value="Chromosome"/>
</dbReference>
<dbReference type="GO" id="GO:0005886">
    <property type="term" value="C:plasma membrane"/>
    <property type="evidence" value="ECO:0007669"/>
    <property type="project" value="UniProtKB-SubCell"/>
</dbReference>
<dbReference type="GO" id="GO:0005524">
    <property type="term" value="F:ATP binding"/>
    <property type="evidence" value="ECO:0007669"/>
    <property type="project" value="UniProtKB-UniRule"/>
</dbReference>
<dbReference type="GO" id="GO:0016887">
    <property type="term" value="F:ATP hydrolysis activity"/>
    <property type="evidence" value="ECO:0007669"/>
    <property type="project" value="InterPro"/>
</dbReference>
<dbReference type="GO" id="GO:0000287">
    <property type="term" value="F:magnesium ion binding"/>
    <property type="evidence" value="ECO:0007669"/>
    <property type="project" value="UniProtKB-UniRule"/>
</dbReference>
<dbReference type="GO" id="GO:0008556">
    <property type="term" value="F:P-type potassium transmembrane transporter activity"/>
    <property type="evidence" value="ECO:0007669"/>
    <property type="project" value="UniProtKB-UniRule"/>
</dbReference>
<dbReference type="CDD" id="cd02078">
    <property type="entry name" value="P-type_ATPase_K"/>
    <property type="match status" value="1"/>
</dbReference>
<dbReference type="FunFam" id="2.70.150.10:FF:000010">
    <property type="entry name" value="Potassium-transporting ATPase ATP-binding subunit"/>
    <property type="match status" value="1"/>
</dbReference>
<dbReference type="FunFam" id="3.40.1110.10:FF:000007">
    <property type="entry name" value="Potassium-transporting ATPase ATP-binding subunit"/>
    <property type="match status" value="1"/>
</dbReference>
<dbReference type="Gene3D" id="3.40.1110.10">
    <property type="entry name" value="Calcium-transporting ATPase, cytoplasmic domain N"/>
    <property type="match status" value="1"/>
</dbReference>
<dbReference type="Gene3D" id="2.70.150.10">
    <property type="entry name" value="Calcium-transporting ATPase, cytoplasmic transduction domain A"/>
    <property type="match status" value="1"/>
</dbReference>
<dbReference type="Gene3D" id="3.40.50.1000">
    <property type="entry name" value="HAD superfamily/HAD-like"/>
    <property type="match status" value="1"/>
</dbReference>
<dbReference type="HAMAP" id="MF_00285">
    <property type="entry name" value="KdpB"/>
    <property type="match status" value="1"/>
</dbReference>
<dbReference type="InterPro" id="IPR023299">
    <property type="entry name" value="ATPase_P-typ_cyto_dom_N"/>
</dbReference>
<dbReference type="InterPro" id="IPR018303">
    <property type="entry name" value="ATPase_P-typ_P_site"/>
</dbReference>
<dbReference type="InterPro" id="IPR023298">
    <property type="entry name" value="ATPase_P-typ_TM_dom_sf"/>
</dbReference>
<dbReference type="InterPro" id="IPR008250">
    <property type="entry name" value="ATPase_P-typ_transduc_dom_A_sf"/>
</dbReference>
<dbReference type="InterPro" id="IPR036412">
    <property type="entry name" value="HAD-like_sf"/>
</dbReference>
<dbReference type="InterPro" id="IPR023214">
    <property type="entry name" value="HAD_sf"/>
</dbReference>
<dbReference type="InterPro" id="IPR006391">
    <property type="entry name" value="P-type_ATPase_bsu_IA"/>
</dbReference>
<dbReference type="InterPro" id="IPR001757">
    <property type="entry name" value="P_typ_ATPase"/>
</dbReference>
<dbReference type="InterPro" id="IPR044492">
    <property type="entry name" value="P_typ_ATPase_HD_dom"/>
</dbReference>
<dbReference type="NCBIfam" id="TIGR01494">
    <property type="entry name" value="ATPase_P-type"/>
    <property type="match status" value="2"/>
</dbReference>
<dbReference type="NCBIfam" id="TIGR01497">
    <property type="entry name" value="kdpB"/>
    <property type="match status" value="1"/>
</dbReference>
<dbReference type="PANTHER" id="PTHR43743">
    <property type="entry name" value="POTASSIUM-TRANSPORTING ATPASE ATP-BINDING SUBUNIT"/>
    <property type="match status" value="1"/>
</dbReference>
<dbReference type="PANTHER" id="PTHR43743:SF1">
    <property type="entry name" value="POTASSIUM-TRANSPORTING ATPASE ATP-BINDING SUBUNIT"/>
    <property type="match status" value="1"/>
</dbReference>
<dbReference type="Pfam" id="PF00122">
    <property type="entry name" value="E1-E2_ATPase"/>
    <property type="match status" value="1"/>
</dbReference>
<dbReference type="Pfam" id="PF00702">
    <property type="entry name" value="Hydrolase"/>
    <property type="match status" value="1"/>
</dbReference>
<dbReference type="PRINTS" id="PR00119">
    <property type="entry name" value="CATATPASE"/>
</dbReference>
<dbReference type="SFLD" id="SFLDG00002">
    <property type="entry name" value="C1.7:_P-type_atpase_like"/>
    <property type="match status" value="1"/>
</dbReference>
<dbReference type="SFLD" id="SFLDF00027">
    <property type="entry name" value="p-type_atpase"/>
    <property type="match status" value="1"/>
</dbReference>
<dbReference type="SUPFAM" id="SSF81653">
    <property type="entry name" value="Calcium ATPase, transduction domain A"/>
    <property type="match status" value="1"/>
</dbReference>
<dbReference type="SUPFAM" id="SSF81665">
    <property type="entry name" value="Calcium ATPase, transmembrane domain M"/>
    <property type="match status" value="1"/>
</dbReference>
<dbReference type="SUPFAM" id="SSF56784">
    <property type="entry name" value="HAD-like"/>
    <property type="match status" value="1"/>
</dbReference>
<dbReference type="SUPFAM" id="SSF81660">
    <property type="entry name" value="Metal cation-transporting ATPase, ATP-binding domain N"/>
    <property type="match status" value="1"/>
</dbReference>
<dbReference type="PROSITE" id="PS00154">
    <property type="entry name" value="ATPASE_E1_E2"/>
    <property type="match status" value="1"/>
</dbReference>
<comment type="function">
    <text evidence="1">Part of the high-affinity ATP-driven potassium transport (or Kdp) system, which catalyzes the hydrolysis of ATP coupled with the electrogenic transport of potassium into the cytoplasm. This subunit is responsible for energy coupling to the transport system and for the release of the potassium ions to the cytoplasm.</text>
</comment>
<comment type="catalytic activity">
    <reaction evidence="1">
        <text>K(+)(out) + ATP + H2O = K(+)(in) + ADP + phosphate + H(+)</text>
        <dbReference type="Rhea" id="RHEA:16777"/>
        <dbReference type="ChEBI" id="CHEBI:15377"/>
        <dbReference type="ChEBI" id="CHEBI:15378"/>
        <dbReference type="ChEBI" id="CHEBI:29103"/>
        <dbReference type="ChEBI" id="CHEBI:30616"/>
        <dbReference type="ChEBI" id="CHEBI:43474"/>
        <dbReference type="ChEBI" id="CHEBI:456216"/>
        <dbReference type="EC" id="7.2.2.6"/>
    </reaction>
    <physiologicalReaction direction="left-to-right" evidence="1">
        <dbReference type="Rhea" id="RHEA:16778"/>
    </physiologicalReaction>
</comment>
<comment type="subunit">
    <text evidence="1">The system is composed of three essential subunits: KdpA, KdpB and KdpC.</text>
</comment>
<comment type="subcellular location">
    <subcellularLocation>
        <location evidence="1">Cell inner membrane</location>
        <topology evidence="1">Multi-pass membrane protein</topology>
    </subcellularLocation>
</comment>
<comment type="similarity">
    <text evidence="1">Belongs to the cation transport ATPase (P-type) (TC 3.A.3) family. Type IA subfamily.</text>
</comment>